<gene>
    <name evidence="1" type="primary">NS</name>
</gene>
<organismHost>
    <name type="scientific">Aves</name>
    <dbReference type="NCBI Taxonomy" id="8782"/>
</organismHost>
<organismHost>
    <name type="scientific">Homo sapiens</name>
    <name type="common">Human</name>
    <dbReference type="NCBI Taxonomy" id="9606"/>
</organismHost>
<organismHost>
    <name type="scientific">Sus scrofa</name>
    <name type="common">Pig</name>
    <dbReference type="NCBI Taxonomy" id="9823"/>
</organismHost>
<accession>P03499</accession>
<accession>Q77AL3</accession>
<feature type="chain" id="PRO_0000078928" description="Non-structural protein 1">
    <location>
        <begin position="1"/>
        <end position="202"/>
    </location>
</feature>
<feature type="region of interest" description="RNA-binding and homodimerization" evidence="1">
    <location>
        <begin position="1"/>
        <end position="73"/>
    </location>
</feature>
<feature type="short sequence motif" description="Nuclear localization signal" evidence="1">
    <location>
        <begin position="34"/>
        <end position="38"/>
    </location>
</feature>
<feature type="short sequence motif" description="Nuclear export signal" evidence="1">
    <location>
        <begin position="137"/>
        <end position="146"/>
    </location>
</feature>
<feature type="sequence variant" description="In strain: A/FM/1/47-MA.">
    <original>G</original>
    <variation>D</variation>
    <location>
        <position position="139"/>
    </location>
</feature>
<proteinExistence type="inferred from homology"/>
<evidence type="ECO:0000255" key="1">
    <source>
        <dbReference type="HAMAP-Rule" id="MF_04066"/>
    </source>
</evidence>
<protein>
    <recommendedName>
        <fullName evidence="1">Non-structural protein 1</fullName>
        <shortName evidence="1">NS1</shortName>
    </recommendedName>
    <alternativeName>
        <fullName evidence="1">NS1A</fullName>
    </alternativeName>
</protein>
<name>NS1_I47A0</name>
<sequence>MDPNTVSSFQVDCFLWHVRKRVADQELGDAPFLDRLRRDQKSLKGRGSTLGLNIETATRVGKQIVERILKEESDEALKMTMASAPASRYLTDMTIEEMSRDWFMLMPKQKVAGPLCIRMDQAIMDKSIILKANFSVIFGRLETLILLRAFTEEGAIVGEISPLPSLPGHTNEDVKNAIGVLIGGLEWNDNTVRVSKTLQRFA</sequence>
<organism>
    <name type="scientific">Influenza A virus (strain A/Fort Monmouth/1/1947 H1N1)</name>
    <dbReference type="NCBI Taxonomy" id="380282"/>
    <lineage>
        <taxon>Viruses</taxon>
        <taxon>Riboviria</taxon>
        <taxon>Orthornavirae</taxon>
        <taxon>Negarnaviricota</taxon>
        <taxon>Polyploviricotina</taxon>
        <taxon>Insthoviricetes</taxon>
        <taxon>Articulavirales</taxon>
        <taxon>Orthomyxoviridae</taxon>
        <taxon>Alphainfluenzavirus</taxon>
        <taxon>Alphainfluenzavirus influenzae</taxon>
        <taxon>Influenza A virus</taxon>
    </lineage>
</organism>
<dbReference type="EMBL" id="K00577">
    <property type="protein sequence ID" value="AAA43522.1"/>
    <property type="molecule type" value="Genomic_RNA"/>
</dbReference>
<dbReference type="EMBL" id="AJ238022">
    <property type="protein sequence ID" value="CAB50889.1"/>
    <property type="molecule type" value="Genomic_RNA"/>
</dbReference>
<dbReference type="SMR" id="P03499"/>
<dbReference type="GO" id="GO:0030430">
    <property type="term" value="C:host cell cytoplasm"/>
    <property type="evidence" value="ECO:0007669"/>
    <property type="project" value="UniProtKB-SubCell"/>
</dbReference>
<dbReference type="GO" id="GO:0042025">
    <property type="term" value="C:host cell nucleus"/>
    <property type="evidence" value="ECO:0007669"/>
    <property type="project" value="UniProtKB-SubCell"/>
</dbReference>
<dbReference type="GO" id="GO:0030291">
    <property type="term" value="F:protein serine/threonine kinase inhibitor activity"/>
    <property type="evidence" value="ECO:0007669"/>
    <property type="project" value="UniProtKB-KW"/>
</dbReference>
<dbReference type="GO" id="GO:0003723">
    <property type="term" value="F:RNA binding"/>
    <property type="evidence" value="ECO:0007669"/>
    <property type="project" value="UniProtKB-KW"/>
</dbReference>
<dbReference type="GO" id="GO:0039540">
    <property type="term" value="P:symbiont-mediated suppression of host cytoplasmic pattern recognition receptor signaling pathway via inhibition of RIG-I activity"/>
    <property type="evidence" value="ECO:0007669"/>
    <property type="project" value="UniProtKB-KW"/>
</dbReference>
<dbReference type="GO" id="GO:0039657">
    <property type="term" value="P:symbiont-mediated suppression of host gene expression"/>
    <property type="evidence" value="ECO:0007669"/>
    <property type="project" value="UniProtKB-KW"/>
</dbReference>
<dbReference type="GO" id="GO:0039524">
    <property type="term" value="P:symbiont-mediated suppression of host mRNA processing"/>
    <property type="evidence" value="ECO:0007669"/>
    <property type="project" value="UniProtKB-KW"/>
</dbReference>
<dbReference type="GO" id="GO:0039580">
    <property type="term" value="P:symbiont-mediated suppression of host PKR/eIFalpha signaling"/>
    <property type="evidence" value="ECO:0007669"/>
    <property type="project" value="UniProtKB-KW"/>
</dbReference>
<dbReference type="GO" id="GO:0039502">
    <property type="term" value="P:symbiont-mediated suppression of host type I interferon-mediated signaling pathway"/>
    <property type="evidence" value="ECO:0007669"/>
    <property type="project" value="UniProtKB-KW"/>
</dbReference>
<dbReference type="FunFam" id="1.10.287.10:FF:000001">
    <property type="entry name" value="Non-structural protein 1"/>
    <property type="match status" value="1"/>
</dbReference>
<dbReference type="Gene3D" id="3.30.420.330">
    <property type="entry name" value="Influenza virus non-structural protein, effector domain"/>
    <property type="match status" value="1"/>
</dbReference>
<dbReference type="Gene3D" id="1.10.287.10">
    <property type="entry name" value="S15/NS1, RNA-binding"/>
    <property type="match status" value="1"/>
</dbReference>
<dbReference type="HAMAP" id="MF_04066">
    <property type="entry name" value="INFV_NS1"/>
    <property type="match status" value="1"/>
</dbReference>
<dbReference type="InterPro" id="IPR004208">
    <property type="entry name" value="NS1"/>
</dbReference>
<dbReference type="InterPro" id="IPR000256">
    <property type="entry name" value="NS1A"/>
</dbReference>
<dbReference type="InterPro" id="IPR038064">
    <property type="entry name" value="NS1A_effect_dom-like_sf"/>
</dbReference>
<dbReference type="InterPro" id="IPR009068">
    <property type="entry name" value="uS15_NS1_RNA-bd_sf"/>
</dbReference>
<dbReference type="Pfam" id="PF00600">
    <property type="entry name" value="Flu_NS1"/>
    <property type="match status" value="1"/>
</dbReference>
<dbReference type="SUPFAM" id="SSF143021">
    <property type="entry name" value="Ns1 effector domain-like"/>
    <property type="match status" value="1"/>
</dbReference>
<dbReference type="SUPFAM" id="SSF47060">
    <property type="entry name" value="S15/NS1 RNA-binding domain"/>
    <property type="match status" value="1"/>
</dbReference>
<keyword id="KW-0025">Alternative splicing</keyword>
<keyword id="KW-1262">Eukaryotic host gene expression shutoff by virus</keyword>
<keyword id="KW-1035">Host cytoplasm</keyword>
<keyword id="KW-1190">Host gene expression shutoff by virus</keyword>
<keyword id="KW-1192">Host mRNA suppression by virus</keyword>
<keyword id="KW-1048">Host nucleus</keyword>
<keyword id="KW-0945">Host-virus interaction</keyword>
<keyword id="KW-1090">Inhibition of host innate immune response by virus</keyword>
<keyword id="KW-1114">Inhibition of host interferon signaling pathway by virus</keyword>
<keyword id="KW-1102">Inhibition of host PKR by virus</keyword>
<keyword id="KW-1103">Inhibition of host pre-mRNA processing by virus</keyword>
<keyword id="KW-1088">Inhibition of host RIG-I by virus</keyword>
<keyword id="KW-1113">Inhibition of host RLR pathway by virus</keyword>
<keyword id="KW-0922">Interferon antiviral system evasion</keyword>
<keyword id="KW-0694">RNA-binding</keyword>
<keyword id="KW-0832">Ubl conjugation</keyword>
<keyword id="KW-0899">Viral immunoevasion</keyword>
<comment type="function">
    <text evidence="1">Inhibits post-transcriptional processing of cellular pre-mRNA, by binding and inhibiting two cellular proteins that are required for the 3'-end processing of cellular pre-mRNAs: the 30 kDa cleavage and polyadenylation specificity factor/CPSF4 and the poly(A)-binding protein 2/PABPN1. In turn, unprocessed 3' end pre-mRNAs accumulate in the host nucleus and are no longer exported to the cytoplasm. Cellular protein synthesis is thereby shut off very early after virus infection. Viral protein synthesis is not affected by the inhibition of the cellular 3' end processing machinery because the poly(A) tails of viral mRNAs are produced by the viral polymerase through a stuttering mechanism. Prevents the establishment of the cellular antiviral state by inhibiting TRIM25-mediated RIGI ubiquitination, which normally triggers the antiviral transduction signal that leads to the activation of type I IFN genes by transcription factors IRF3 and IRF7. Also binds poly(A) and U6 snRNA. Inhibits the integrated stress response (ISR) in the infected cell by blocking dsRNA binding by EIF2AK2/PKR and further phosphorylation of EIF2S1/EIF-2ALPHA. Stress granule formation is thus inhibited, which allows protein synthesis and viral replication.</text>
</comment>
<comment type="subunit">
    <text evidence="1">Homodimer. Interacts with host TRIM25 (via coiled coil); this interaction specifically inhibits TRIM25 multimerization and TRIM25-mediated RIGI CARD ubiquitination. Interacts with human EIF2AK2/PKR, CPSF4, IVNS1ABP and PABPN1.</text>
</comment>
<comment type="subcellular location">
    <subcellularLocation>
        <location evidence="1">Host nucleus</location>
    </subcellularLocation>
    <subcellularLocation>
        <location evidence="1">Host cytoplasm</location>
    </subcellularLocation>
    <text evidence="1">In uninfected, transfected cells, NS1 is localized in the nucleus. Only in virus infected cells, the nuclear export signal is unveiled, presumably by a viral protein, and a fraction of NS1 is exported in the cytoplasm.</text>
</comment>
<comment type="alternative products">
    <event type="alternative splicing"/>
    <isoform>
        <id>P03499-1</id>
        <name>NS1</name>
        <sequence type="displayed"/>
    </isoform>
    <isoform>
        <id>P03506-1</id>
        <name>NEP</name>
        <name>NS2</name>
        <sequence type="external"/>
    </isoform>
</comment>
<comment type="domain">
    <text evidence="1">The dsRNA-binding region is required for suppression of RNA silencing.</text>
</comment>
<comment type="PTM">
    <text evidence="1">Upon interferon induction, ISGylated via host HERC5; this results in the impairment of NS1 interaction with RNA targets due to its inability to form homodimers and to interact with host EIF2AK2/PKR.</text>
</comment>
<comment type="similarity">
    <text evidence="1">Belongs to the influenza A viruses NS1 family.</text>
</comment>
<reference key="1">
    <citation type="journal article" date="1983" name="J. Virol.">
        <title>Sequential mutations in the NS genes of influenza virus field strains.</title>
        <authorList>
            <person name="Krystal M."/>
            <person name="Buonagurio D.A."/>
            <person name="Young J.F."/>
            <person name="Palese P."/>
        </authorList>
    </citation>
    <scope>NUCLEOTIDE SEQUENCE [GENOMIC RNA]</scope>
</reference>
<reference key="2">
    <citation type="journal article" date="1994" name="J. Virol.">
        <title>The influenza virus variant A/FM/1/47-MA possesses single amino acid replacements in the hemagglutinin, controlling virulence, and in the matrix protein, controlling virulence as well as growth.</title>
        <authorList>
            <person name="Smeenk C.A."/>
            <person name="Brown E.G."/>
        </authorList>
    </citation>
    <scope>NUCLEOTIDE SEQUENCE</scope>
    <source>
        <strain>A/FM/1/47-MA</strain>
    </source>
</reference>
<reference key="3">
    <citation type="journal article" date="2003" name="Virology">
        <title>Intracellular warfare between human influenza viruses and human cells: the roles of the viral NS1 protein.</title>
        <authorList>
            <person name="Krug R.M."/>
            <person name="Yuan W."/>
            <person name="Noah D.L."/>
            <person name="Latham A.G."/>
        </authorList>
    </citation>
    <scope>REVIEW</scope>
</reference>